<protein>
    <recommendedName>
        <fullName evidence="1">Large ribosomal subunit protein bL27</fullName>
    </recommendedName>
    <alternativeName>
        <fullName evidence="3">50S ribosomal protein L27</fullName>
    </alternativeName>
</protein>
<reference key="1">
    <citation type="journal article" date="2015" name="Genome Announc.">
        <title>Complete genome sequence of Anaeromyxobacter sp. Fw109-5, an anaerobic, metal-reducing bacterium isolated from a contaminated subsurface environment.</title>
        <authorList>
            <person name="Hwang C."/>
            <person name="Copeland A."/>
            <person name="Lucas S."/>
            <person name="Lapidus A."/>
            <person name="Barry K."/>
            <person name="Glavina Del Rio T."/>
            <person name="Dalin E."/>
            <person name="Tice H."/>
            <person name="Pitluck S."/>
            <person name="Sims D."/>
            <person name="Brettin T."/>
            <person name="Bruce D.C."/>
            <person name="Detter J.C."/>
            <person name="Han C.S."/>
            <person name="Schmutz J."/>
            <person name="Larimer F.W."/>
            <person name="Land M.L."/>
            <person name="Hauser L.J."/>
            <person name="Kyrpides N."/>
            <person name="Lykidis A."/>
            <person name="Richardson P."/>
            <person name="Belieav A."/>
            <person name="Sanford R.A."/>
            <person name="Loeffler F.E."/>
            <person name="Fields M.W."/>
        </authorList>
    </citation>
    <scope>NUCLEOTIDE SEQUENCE [LARGE SCALE GENOMIC DNA]</scope>
    <source>
        <strain>Fw109-5</strain>
    </source>
</reference>
<feature type="chain" id="PRO_1000017404" description="Large ribosomal subunit protein bL27">
    <location>
        <begin position="1"/>
        <end position="85"/>
    </location>
</feature>
<feature type="region of interest" description="Disordered" evidence="2">
    <location>
        <begin position="1"/>
        <end position="22"/>
    </location>
</feature>
<organism>
    <name type="scientific">Anaeromyxobacter sp. (strain Fw109-5)</name>
    <dbReference type="NCBI Taxonomy" id="404589"/>
    <lineage>
        <taxon>Bacteria</taxon>
        <taxon>Pseudomonadati</taxon>
        <taxon>Myxococcota</taxon>
        <taxon>Myxococcia</taxon>
        <taxon>Myxococcales</taxon>
        <taxon>Cystobacterineae</taxon>
        <taxon>Anaeromyxobacteraceae</taxon>
        <taxon>Anaeromyxobacter</taxon>
    </lineage>
</organism>
<comment type="similarity">
    <text evidence="1">Belongs to the bacterial ribosomal protein bL27 family.</text>
</comment>
<proteinExistence type="inferred from homology"/>
<gene>
    <name evidence="1" type="primary">rpmA</name>
    <name type="ordered locus">Anae109_4327</name>
</gene>
<accession>A7HIF9</accession>
<name>RL27_ANADF</name>
<keyword id="KW-1185">Reference proteome</keyword>
<keyword id="KW-0687">Ribonucleoprotein</keyword>
<keyword id="KW-0689">Ribosomal protein</keyword>
<sequence length="85" mass="9071">MAHKKGQGSSRNGRDSPGQHRGIKVYGSEKVVAGNILVRQVGTLVHPGANVGMGKDFTLFALVDGTVKYSRARGDRRIVSILPEA</sequence>
<dbReference type="EMBL" id="CP000769">
    <property type="protein sequence ID" value="ABS28505.1"/>
    <property type="molecule type" value="Genomic_DNA"/>
</dbReference>
<dbReference type="RefSeq" id="WP_012099150.1">
    <property type="nucleotide sequence ID" value="NC_009675.1"/>
</dbReference>
<dbReference type="SMR" id="A7HIF9"/>
<dbReference type="STRING" id="404589.Anae109_4327"/>
<dbReference type="KEGG" id="afw:Anae109_4327"/>
<dbReference type="eggNOG" id="COG0211">
    <property type="taxonomic scope" value="Bacteria"/>
</dbReference>
<dbReference type="HOGENOM" id="CLU_095424_4_0_7"/>
<dbReference type="OrthoDB" id="9803474at2"/>
<dbReference type="Proteomes" id="UP000006382">
    <property type="component" value="Chromosome"/>
</dbReference>
<dbReference type="GO" id="GO:0022625">
    <property type="term" value="C:cytosolic large ribosomal subunit"/>
    <property type="evidence" value="ECO:0007669"/>
    <property type="project" value="TreeGrafter"/>
</dbReference>
<dbReference type="GO" id="GO:0003735">
    <property type="term" value="F:structural constituent of ribosome"/>
    <property type="evidence" value="ECO:0007669"/>
    <property type="project" value="InterPro"/>
</dbReference>
<dbReference type="GO" id="GO:0006412">
    <property type="term" value="P:translation"/>
    <property type="evidence" value="ECO:0007669"/>
    <property type="project" value="UniProtKB-UniRule"/>
</dbReference>
<dbReference type="FunFam" id="2.40.50.100:FF:000060">
    <property type="entry name" value="Apicoplast ribosomal protein L27"/>
    <property type="match status" value="1"/>
</dbReference>
<dbReference type="Gene3D" id="2.40.50.100">
    <property type="match status" value="1"/>
</dbReference>
<dbReference type="HAMAP" id="MF_00539">
    <property type="entry name" value="Ribosomal_bL27"/>
    <property type="match status" value="1"/>
</dbReference>
<dbReference type="InterPro" id="IPR001684">
    <property type="entry name" value="Ribosomal_bL27"/>
</dbReference>
<dbReference type="NCBIfam" id="TIGR00062">
    <property type="entry name" value="L27"/>
    <property type="match status" value="1"/>
</dbReference>
<dbReference type="PANTHER" id="PTHR15893:SF0">
    <property type="entry name" value="LARGE RIBOSOMAL SUBUNIT PROTEIN BL27M"/>
    <property type="match status" value="1"/>
</dbReference>
<dbReference type="PANTHER" id="PTHR15893">
    <property type="entry name" value="RIBOSOMAL PROTEIN L27"/>
    <property type="match status" value="1"/>
</dbReference>
<dbReference type="Pfam" id="PF01016">
    <property type="entry name" value="Ribosomal_L27"/>
    <property type="match status" value="1"/>
</dbReference>
<dbReference type="PRINTS" id="PR00063">
    <property type="entry name" value="RIBOSOMALL27"/>
</dbReference>
<dbReference type="SUPFAM" id="SSF110324">
    <property type="entry name" value="Ribosomal L27 protein-like"/>
    <property type="match status" value="1"/>
</dbReference>
<evidence type="ECO:0000255" key="1">
    <source>
        <dbReference type="HAMAP-Rule" id="MF_00539"/>
    </source>
</evidence>
<evidence type="ECO:0000256" key="2">
    <source>
        <dbReference type="SAM" id="MobiDB-lite"/>
    </source>
</evidence>
<evidence type="ECO:0000305" key="3"/>